<organism>
    <name type="scientific">Caenorhabditis elegans</name>
    <dbReference type="NCBI Taxonomy" id="6239"/>
    <lineage>
        <taxon>Eukaryota</taxon>
        <taxon>Metazoa</taxon>
        <taxon>Ecdysozoa</taxon>
        <taxon>Nematoda</taxon>
        <taxon>Chromadorea</taxon>
        <taxon>Rhabditida</taxon>
        <taxon>Rhabditina</taxon>
        <taxon>Rhabditomorpha</taxon>
        <taxon>Rhabditoidea</taxon>
        <taxon>Rhabditidae</taxon>
        <taxon>Peloderinae</taxon>
        <taxon>Caenorhabditis</taxon>
    </lineage>
</organism>
<feature type="chain" id="PRO_0000223582" description="Nuclear hormone receptor family member nhr-79">
    <location>
        <begin position="1"/>
        <end position="463"/>
    </location>
</feature>
<feature type="domain" description="NR LBD" evidence="2">
    <location>
        <begin position="203"/>
        <end position="463"/>
    </location>
</feature>
<feature type="DNA-binding region" description="Nuclear receptor" evidence="1">
    <location>
        <begin position="3"/>
        <end position="81"/>
    </location>
</feature>
<feature type="zinc finger region" description="NR C4-type" evidence="1">
    <location>
        <begin position="6"/>
        <end position="27"/>
    </location>
</feature>
<feature type="zinc finger region" description="NR C4-type" evidence="1">
    <location>
        <begin position="43"/>
        <end position="64"/>
    </location>
</feature>
<feature type="region of interest" description="Disordered" evidence="3">
    <location>
        <begin position="83"/>
        <end position="119"/>
    </location>
</feature>
<dbReference type="EMBL" id="Z82055">
    <property type="protein sequence ID" value="CAB04850.2"/>
    <property type="molecule type" value="Genomic_DNA"/>
</dbReference>
<dbReference type="PIR" id="T25327">
    <property type="entry name" value="T25327"/>
</dbReference>
<dbReference type="RefSeq" id="NP_507734.4">
    <property type="nucleotide sequence ID" value="NM_075333.6"/>
</dbReference>
<dbReference type="BioGRID" id="45227">
    <property type="interactions" value="2"/>
</dbReference>
<dbReference type="DIP" id="DIP-25014N"/>
<dbReference type="FunCoup" id="O18141">
    <property type="interactions" value="316"/>
</dbReference>
<dbReference type="IntAct" id="O18141">
    <property type="interactions" value="2"/>
</dbReference>
<dbReference type="STRING" id="6239.T26H2.9a.1"/>
<dbReference type="PaxDb" id="6239-T26H2.9a"/>
<dbReference type="EnsemblMetazoa" id="T26H2.9a.1">
    <property type="protein sequence ID" value="T26H2.9a.1"/>
    <property type="gene ID" value="WBGene00003669"/>
</dbReference>
<dbReference type="GeneID" id="180265"/>
<dbReference type="KEGG" id="cel:CELE_T26H2.9"/>
<dbReference type="UCSC" id="T26H2.9">
    <property type="organism name" value="c. elegans"/>
</dbReference>
<dbReference type="AGR" id="WB:WBGene00003669"/>
<dbReference type="CTD" id="180265"/>
<dbReference type="WormBase" id="T26H2.9a">
    <property type="protein sequence ID" value="CE31072"/>
    <property type="gene ID" value="WBGene00003669"/>
    <property type="gene designation" value="nhr-79"/>
</dbReference>
<dbReference type="eggNOG" id="KOG3575">
    <property type="taxonomic scope" value="Eukaryota"/>
</dbReference>
<dbReference type="GeneTree" id="ENSGT00970000196525"/>
<dbReference type="HOGENOM" id="CLU_007368_17_0_1"/>
<dbReference type="InParanoid" id="O18141"/>
<dbReference type="OMA" id="YIEITVY"/>
<dbReference type="OrthoDB" id="5793246at2759"/>
<dbReference type="PhylomeDB" id="O18141"/>
<dbReference type="PRO" id="PR:O18141"/>
<dbReference type="Proteomes" id="UP000001940">
    <property type="component" value="Chromosome V"/>
</dbReference>
<dbReference type="Bgee" id="WBGene00003669">
    <property type="expression patterns" value="Expressed in larva and 3 other cell types or tissues"/>
</dbReference>
<dbReference type="ExpressionAtlas" id="O18141">
    <property type="expression patterns" value="baseline and differential"/>
</dbReference>
<dbReference type="GO" id="GO:0005634">
    <property type="term" value="C:nucleus"/>
    <property type="evidence" value="ECO:0000318"/>
    <property type="project" value="GO_Central"/>
</dbReference>
<dbReference type="GO" id="GO:0003700">
    <property type="term" value="F:DNA-binding transcription factor activity"/>
    <property type="evidence" value="ECO:0007669"/>
    <property type="project" value="InterPro"/>
</dbReference>
<dbReference type="GO" id="GO:0000978">
    <property type="term" value="F:RNA polymerase II cis-regulatory region sequence-specific DNA binding"/>
    <property type="evidence" value="ECO:0007669"/>
    <property type="project" value="InterPro"/>
</dbReference>
<dbReference type="GO" id="GO:0008270">
    <property type="term" value="F:zinc ion binding"/>
    <property type="evidence" value="ECO:0007669"/>
    <property type="project" value="UniProtKB-KW"/>
</dbReference>
<dbReference type="CDD" id="cd06960">
    <property type="entry name" value="NR_DBD_HNF4A"/>
    <property type="match status" value="1"/>
</dbReference>
<dbReference type="FunFam" id="3.30.50.10:FF:000143">
    <property type="entry name" value="Thyroid hormone receptor alpha"/>
    <property type="match status" value="1"/>
</dbReference>
<dbReference type="Gene3D" id="3.30.50.10">
    <property type="entry name" value="Erythroid Transcription Factor GATA-1, subunit A"/>
    <property type="match status" value="1"/>
</dbReference>
<dbReference type="Gene3D" id="1.10.565.10">
    <property type="entry name" value="Retinoid X Receptor"/>
    <property type="match status" value="1"/>
</dbReference>
<dbReference type="InterPro" id="IPR049636">
    <property type="entry name" value="HNF4-like_DBD"/>
</dbReference>
<dbReference type="InterPro" id="IPR035500">
    <property type="entry name" value="NHR-like_dom_sf"/>
</dbReference>
<dbReference type="InterPro" id="IPR000536">
    <property type="entry name" value="Nucl_hrmn_rcpt_lig-bd"/>
</dbReference>
<dbReference type="InterPro" id="IPR001628">
    <property type="entry name" value="Znf_hrmn_rcpt"/>
</dbReference>
<dbReference type="InterPro" id="IPR013088">
    <property type="entry name" value="Znf_NHR/GATA"/>
</dbReference>
<dbReference type="PANTHER" id="PTHR46397:SF3">
    <property type="entry name" value="NR LBD DOMAIN-CONTAINING PROTEIN-RELATED"/>
    <property type="match status" value="1"/>
</dbReference>
<dbReference type="PANTHER" id="PTHR46397">
    <property type="entry name" value="NUCLEAR HORMONE RECEPTOR FAMILY-RELATED"/>
    <property type="match status" value="1"/>
</dbReference>
<dbReference type="Pfam" id="PF00104">
    <property type="entry name" value="Hormone_recep"/>
    <property type="match status" value="1"/>
</dbReference>
<dbReference type="Pfam" id="PF00105">
    <property type="entry name" value="zf-C4"/>
    <property type="match status" value="1"/>
</dbReference>
<dbReference type="PRINTS" id="PR00047">
    <property type="entry name" value="STROIDFINGER"/>
</dbReference>
<dbReference type="SMART" id="SM00430">
    <property type="entry name" value="HOLI"/>
    <property type="match status" value="1"/>
</dbReference>
<dbReference type="SMART" id="SM00399">
    <property type="entry name" value="ZnF_C4"/>
    <property type="match status" value="1"/>
</dbReference>
<dbReference type="SUPFAM" id="SSF57716">
    <property type="entry name" value="Glucocorticoid receptor-like (DNA-binding domain)"/>
    <property type="match status" value="1"/>
</dbReference>
<dbReference type="SUPFAM" id="SSF48508">
    <property type="entry name" value="Nuclear receptor ligand-binding domain"/>
    <property type="match status" value="1"/>
</dbReference>
<dbReference type="PROSITE" id="PS51843">
    <property type="entry name" value="NR_LBD"/>
    <property type="match status" value="1"/>
</dbReference>
<dbReference type="PROSITE" id="PS00031">
    <property type="entry name" value="NUCLEAR_REC_DBD_1"/>
    <property type="match status" value="1"/>
</dbReference>
<dbReference type="PROSITE" id="PS51030">
    <property type="entry name" value="NUCLEAR_REC_DBD_2"/>
    <property type="match status" value="1"/>
</dbReference>
<gene>
    <name type="primary">nhr-79</name>
    <name type="ORF">T26H2.9</name>
</gene>
<keyword id="KW-0238">DNA-binding</keyword>
<keyword id="KW-0479">Metal-binding</keyword>
<keyword id="KW-0539">Nucleus</keyword>
<keyword id="KW-0675">Receptor</keyword>
<keyword id="KW-1185">Reference proteome</keyword>
<keyword id="KW-0804">Transcription</keyword>
<keyword id="KW-0805">Transcription regulation</keyword>
<keyword id="KW-0862">Zinc</keyword>
<keyword id="KW-0863">Zinc-finger</keyword>
<protein>
    <recommendedName>
        <fullName>Nuclear hormone receptor family member nhr-79</fullName>
    </recommendedName>
</protein>
<proteinExistence type="inferred from homology"/>
<comment type="function">
    <text>Orphan nuclear receptor.</text>
</comment>
<comment type="subcellular location">
    <subcellularLocation>
        <location evidence="1">Nucleus</location>
    </subcellularLocation>
</comment>
<comment type="similarity">
    <text evidence="4">Belongs to the nuclear hormone receptor family.</text>
</comment>
<evidence type="ECO:0000255" key="1">
    <source>
        <dbReference type="PROSITE-ProRule" id="PRU00407"/>
    </source>
</evidence>
<evidence type="ECO:0000255" key="2">
    <source>
        <dbReference type="PROSITE-ProRule" id="PRU01189"/>
    </source>
</evidence>
<evidence type="ECO:0000256" key="3">
    <source>
        <dbReference type="SAM" id="MobiDB-lite"/>
    </source>
</evidence>
<evidence type="ECO:0000305" key="4"/>
<accession>O18141</accession>
<reference key="1">
    <citation type="journal article" date="1998" name="Science">
        <title>Genome sequence of the nematode C. elegans: a platform for investigating biology.</title>
        <authorList>
            <consortium name="The C. elegans sequencing consortium"/>
        </authorList>
    </citation>
    <scope>NUCLEOTIDE SEQUENCE [LARGE SCALE GENOMIC DNA]</scope>
    <source>
        <strain>Bristol N2</strain>
    </source>
</reference>
<sequence>MVRGKCMVCDSPNATNYHFGAQSCKACAAFFRRSIAMDQCYECLGDGVHSCKIDHTLRLNCRHCRLKKCQKAGMMRDLVQAKREIKSDKGKNSRNSSQSEDFFSPPPEQPGPSNYFDQFPWQASENEMDPYPSSPKIRKMSENLMGIDELQQFIQIPAGVDDFPDIFTDSDEIRSRMTSISEASAYVTGMEEEERLFGLAGLYTEQVINLNMRRRITYTDRLLGSVFDAPCVCPYDKADLKLFDHRTYRQKNRNDYTMILDYINRFPEFESLSKSEKTVLFRTAAAVDVLLDQSYYSQVIFPTEDVLVTANGEYLPMNPMPKVENQRDSGNFHSDEDYDRFKMLTSMKVRQWLHVCEPMKKLDMSLAEFSLFKALTIWHYNYYKLQCTGKQICSRQRDDIFRTLLLICDDEGHDSALIRASEIVLAVGIAMAEVHEMVTSYIEITVYDVLDDPILKDMLKFQY</sequence>
<name>NHR79_CAEEL</name>